<evidence type="ECO:0000250" key="1"/>
<evidence type="ECO:0000250" key="2">
    <source>
        <dbReference type="UniProtKB" id="P62820"/>
    </source>
</evidence>
<evidence type="ECO:0000256" key="3">
    <source>
        <dbReference type="SAM" id="MobiDB-lite"/>
    </source>
</evidence>
<evidence type="ECO:0000305" key="4"/>
<gene>
    <name type="primary">rab1A</name>
    <name type="synonym">rabA</name>
    <name type="ORF">DDB_G0283757</name>
</gene>
<feature type="chain" id="PRO_0000121266" description="Ras-related protein Rab-1A">
    <location>
        <begin position="1"/>
        <end position="202"/>
    </location>
</feature>
<feature type="region of interest" description="Disordered" evidence="3">
    <location>
        <begin position="180"/>
        <end position="202"/>
    </location>
</feature>
<feature type="short sequence motif" description="Effector region" evidence="1">
    <location>
        <begin position="37"/>
        <end position="45"/>
    </location>
</feature>
<feature type="binding site" evidence="2">
    <location>
        <begin position="15"/>
        <end position="23"/>
    </location>
    <ligand>
        <name>GTP</name>
        <dbReference type="ChEBI" id="CHEBI:37565"/>
    </ligand>
</feature>
<feature type="binding site" evidence="2">
    <location>
        <begin position="33"/>
        <end position="40"/>
    </location>
    <ligand>
        <name>GTP</name>
        <dbReference type="ChEBI" id="CHEBI:37565"/>
    </ligand>
</feature>
<feature type="binding site" evidence="2">
    <location>
        <begin position="63"/>
        <end position="67"/>
    </location>
    <ligand>
        <name>GTP</name>
        <dbReference type="ChEBI" id="CHEBI:37565"/>
    </ligand>
</feature>
<feature type="binding site" evidence="2">
    <location>
        <begin position="121"/>
        <end position="124"/>
    </location>
    <ligand>
        <name>GTP</name>
        <dbReference type="ChEBI" id="CHEBI:37565"/>
    </ligand>
</feature>
<feature type="binding site" evidence="2">
    <location>
        <begin position="151"/>
        <end position="153"/>
    </location>
    <ligand>
        <name>GTP</name>
        <dbReference type="ChEBI" id="CHEBI:37565"/>
    </ligand>
</feature>
<feature type="lipid moiety-binding region" description="S-geranylgeranyl cysteine" evidence="1">
    <location>
        <position position="201"/>
    </location>
</feature>
<feature type="lipid moiety-binding region" description="S-geranylgeranyl cysteine" evidence="1">
    <location>
        <position position="202"/>
    </location>
</feature>
<comment type="subcellular location">
    <subcellularLocation>
        <location evidence="4">Cell membrane</location>
        <topology evidence="4">Lipid-anchor</topology>
        <orientation evidence="4">Cytoplasmic side</orientation>
    </subcellularLocation>
</comment>
<comment type="similarity">
    <text evidence="4">Belongs to the small GTPase superfamily. Rab family.</text>
</comment>
<comment type="sequence caution" evidence="4">
    <conflict type="frameshift">
        <sequence resource="EMBL-CDS" id="AAC37385"/>
    </conflict>
</comment>
<organism>
    <name type="scientific">Dictyostelium discoideum</name>
    <name type="common">Social amoeba</name>
    <dbReference type="NCBI Taxonomy" id="44689"/>
    <lineage>
        <taxon>Eukaryota</taxon>
        <taxon>Amoebozoa</taxon>
        <taxon>Evosea</taxon>
        <taxon>Eumycetozoa</taxon>
        <taxon>Dictyostelia</taxon>
        <taxon>Dictyosteliales</taxon>
        <taxon>Dictyosteliaceae</taxon>
        <taxon>Dictyostelium</taxon>
    </lineage>
</organism>
<dbReference type="EMBL" id="L21009">
    <property type="protein sequence ID" value="AAC37385.1"/>
    <property type="status" value="ALT_FRAME"/>
    <property type="molecule type" value="mRNA"/>
</dbReference>
<dbReference type="EMBL" id="AAFI02000057">
    <property type="protein sequence ID" value="EAL65493.1"/>
    <property type="molecule type" value="Genomic_DNA"/>
</dbReference>
<dbReference type="RefSeq" id="XP_638915.1">
    <property type="nucleotide sequence ID" value="XM_633823.1"/>
</dbReference>
<dbReference type="SMR" id="P34139"/>
<dbReference type="BioGRID" id="1249315">
    <property type="interactions" value="1"/>
</dbReference>
<dbReference type="FunCoup" id="P34139">
    <property type="interactions" value="536"/>
</dbReference>
<dbReference type="STRING" id="44689.P34139"/>
<dbReference type="PaxDb" id="44689-DDB0191476"/>
<dbReference type="EnsemblProtists" id="EAL65493">
    <property type="protein sequence ID" value="EAL65493"/>
    <property type="gene ID" value="DDB_G0283757"/>
</dbReference>
<dbReference type="GeneID" id="8624312"/>
<dbReference type="KEGG" id="ddi:DDB_G0283757"/>
<dbReference type="dictyBase" id="DDB_G0283757">
    <property type="gene designation" value="rab1A"/>
</dbReference>
<dbReference type="VEuPathDB" id="AmoebaDB:DDB_G0283757"/>
<dbReference type="eggNOG" id="KOG0084">
    <property type="taxonomic scope" value="Eukaryota"/>
</dbReference>
<dbReference type="HOGENOM" id="CLU_041217_10_1_1"/>
<dbReference type="InParanoid" id="P34139"/>
<dbReference type="OMA" id="PDYHYLF"/>
<dbReference type="PhylomeDB" id="P34139"/>
<dbReference type="Reactome" id="R-DDI-162658">
    <property type="pathway name" value="Golgi Cisternae Pericentriolar Stack Reorganization"/>
</dbReference>
<dbReference type="Reactome" id="R-DDI-204005">
    <property type="pathway name" value="COPII-mediated vesicle transport"/>
</dbReference>
<dbReference type="Reactome" id="R-DDI-6807878">
    <property type="pathway name" value="COPI-mediated anterograde transport"/>
</dbReference>
<dbReference type="Reactome" id="R-DDI-6811434">
    <property type="pathway name" value="COPI-dependent Golgi-to-ER retrograde traffic"/>
</dbReference>
<dbReference type="Reactome" id="R-DDI-6811440">
    <property type="pathway name" value="Retrograde transport at the Trans-Golgi-Network"/>
</dbReference>
<dbReference type="Reactome" id="R-DDI-8873719">
    <property type="pathway name" value="RAB geranylgeranylation"/>
</dbReference>
<dbReference type="Reactome" id="R-DDI-8876198">
    <property type="pathway name" value="RAB GEFs exchange GTP for GDP on RABs"/>
</dbReference>
<dbReference type="PRO" id="PR:P34139"/>
<dbReference type="Proteomes" id="UP000002195">
    <property type="component" value="Chromosome 4"/>
</dbReference>
<dbReference type="GO" id="GO:0012505">
    <property type="term" value="C:endomembrane system"/>
    <property type="evidence" value="ECO:0000318"/>
    <property type="project" value="GO_Central"/>
</dbReference>
<dbReference type="GO" id="GO:0031012">
    <property type="term" value="C:extracellular matrix"/>
    <property type="evidence" value="ECO:0007005"/>
    <property type="project" value="dictyBase"/>
</dbReference>
<dbReference type="GO" id="GO:0005811">
    <property type="term" value="C:lipid droplet"/>
    <property type="evidence" value="ECO:0007005"/>
    <property type="project" value="dictyBase"/>
</dbReference>
<dbReference type="GO" id="GO:0140220">
    <property type="term" value="C:pathogen-containing vacuole"/>
    <property type="evidence" value="ECO:0000314"/>
    <property type="project" value="dictyBase"/>
</dbReference>
<dbReference type="GO" id="GO:0005886">
    <property type="term" value="C:plasma membrane"/>
    <property type="evidence" value="ECO:0007669"/>
    <property type="project" value="UniProtKB-SubCell"/>
</dbReference>
<dbReference type="GO" id="GO:0031143">
    <property type="term" value="C:pseudopodium"/>
    <property type="evidence" value="ECO:0000314"/>
    <property type="project" value="dictyBase"/>
</dbReference>
<dbReference type="GO" id="GO:0005525">
    <property type="term" value="F:GTP binding"/>
    <property type="evidence" value="ECO:0007669"/>
    <property type="project" value="UniProtKB-KW"/>
</dbReference>
<dbReference type="GO" id="GO:0003924">
    <property type="term" value="F:GTPase activity"/>
    <property type="evidence" value="ECO:0000318"/>
    <property type="project" value="GO_Central"/>
</dbReference>
<dbReference type="GO" id="GO:0043539">
    <property type="term" value="F:protein serine/threonine kinase activator activity"/>
    <property type="evidence" value="ECO:0000314"/>
    <property type="project" value="dictyBase"/>
</dbReference>
<dbReference type="GO" id="GO:0006971">
    <property type="term" value="P:hypotonic response"/>
    <property type="evidence" value="ECO:0007007"/>
    <property type="project" value="dictyBase"/>
</dbReference>
<dbReference type="GO" id="GO:0006886">
    <property type="term" value="P:intracellular protein transport"/>
    <property type="evidence" value="ECO:0000318"/>
    <property type="project" value="GO_Central"/>
</dbReference>
<dbReference type="GO" id="GO:0032482">
    <property type="term" value="P:Rab protein signal transduction"/>
    <property type="evidence" value="ECO:0000315"/>
    <property type="project" value="dictyBase"/>
</dbReference>
<dbReference type="CDD" id="cd01869">
    <property type="entry name" value="Rab1_Ypt1"/>
    <property type="match status" value="1"/>
</dbReference>
<dbReference type="FunFam" id="3.40.50.300:FF:000359">
    <property type="entry name" value="Small GTP-binding protein"/>
    <property type="match status" value="1"/>
</dbReference>
<dbReference type="Gene3D" id="3.40.50.300">
    <property type="entry name" value="P-loop containing nucleotide triphosphate hydrolases"/>
    <property type="match status" value="1"/>
</dbReference>
<dbReference type="InterPro" id="IPR027417">
    <property type="entry name" value="P-loop_NTPase"/>
</dbReference>
<dbReference type="InterPro" id="IPR050227">
    <property type="entry name" value="Rab"/>
</dbReference>
<dbReference type="InterPro" id="IPR005225">
    <property type="entry name" value="Small_GTP-bd"/>
</dbReference>
<dbReference type="InterPro" id="IPR001806">
    <property type="entry name" value="Small_GTPase"/>
</dbReference>
<dbReference type="NCBIfam" id="TIGR00231">
    <property type="entry name" value="small_GTP"/>
    <property type="match status" value="1"/>
</dbReference>
<dbReference type="PANTHER" id="PTHR47977">
    <property type="entry name" value="RAS-RELATED PROTEIN RAB"/>
    <property type="match status" value="1"/>
</dbReference>
<dbReference type="Pfam" id="PF00071">
    <property type="entry name" value="Ras"/>
    <property type="match status" value="1"/>
</dbReference>
<dbReference type="PRINTS" id="PR00449">
    <property type="entry name" value="RASTRNSFRMNG"/>
</dbReference>
<dbReference type="SMART" id="SM00175">
    <property type="entry name" value="RAB"/>
    <property type="match status" value="1"/>
</dbReference>
<dbReference type="SMART" id="SM00176">
    <property type="entry name" value="RAN"/>
    <property type="match status" value="1"/>
</dbReference>
<dbReference type="SMART" id="SM00173">
    <property type="entry name" value="RAS"/>
    <property type="match status" value="1"/>
</dbReference>
<dbReference type="SMART" id="SM00174">
    <property type="entry name" value="RHO"/>
    <property type="match status" value="1"/>
</dbReference>
<dbReference type="SUPFAM" id="SSF52540">
    <property type="entry name" value="P-loop containing nucleoside triphosphate hydrolases"/>
    <property type="match status" value="1"/>
</dbReference>
<dbReference type="PROSITE" id="PS51419">
    <property type="entry name" value="RAB"/>
    <property type="match status" value="1"/>
</dbReference>
<accession>P34139</accession>
<accession>Q54QF6</accession>
<keyword id="KW-1003">Cell membrane</keyword>
<keyword id="KW-0342">GTP-binding</keyword>
<keyword id="KW-0449">Lipoprotein</keyword>
<keyword id="KW-0472">Membrane</keyword>
<keyword id="KW-0547">Nucleotide-binding</keyword>
<keyword id="KW-0636">Prenylation</keyword>
<keyword id="KW-1185">Reference proteome</keyword>
<reference key="1">
    <citation type="journal article" date="1993" name="Gene">
        <title>Cloning and characterization of five novel Dictyostelium discoideum rab-related genes.</title>
        <authorList>
            <person name="Bush J.M. IV"/>
            <person name="Franek K."/>
            <person name="Daniel J.M."/>
            <person name="Spiegelman G.B."/>
            <person name="Weeks G."/>
            <person name="Cardelli J.A."/>
        </authorList>
    </citation>
    <scope>NUCLEOTIDE SEQUENCE [MRNA]</scope>
    <source>
        <strain>AX3</strain>
    </source>
</reference>
<reference key="2">
    <citation type="journal article" date="2005" name="Nature">
        <title>The genome of the social amoeba Dictyostelium discoideum.</title>
        <authorList>
            <person name="Eichinger L."/>
            <person name="Pachebat J.A."/>
            <person name="Gloeckner G."/>
            <person name="Rajandream M.A."/>
            <person name="Sucgang R."/>
            <person name="Berriman M."/>
            <person name="Song J."/>
            <person name="Olsen R."/>
            <person name="Szafranski K."/>
            <person name="Xu Q."/>
            <person name="Tunggal B."/>
            <person name="Kummerfeld S."/>
            <person name="Madera M."/>
            <person name="Konfortov B.A."/>
            <person name="Rivero F."/>
            <person name="Bankier A.T."/>
            <person name="Lehmann R."/>
            <person name="Hamlin N."/>
            <person name="Davies R."/>
            <person name="Gaudet P."/>
            <person name="Fey P."/>
            <person name="Pilcher K."/>
            <person name="Chen G."/>
            <person name="Saunders D."/>
            <person name="Sodergren E.J."/>
            <person name="Davis P."/>
            <person name="Kerhornou A."/>
            <person name="Nie X."/>
            <person name="Hall N."/>
            <person name="Anjard C."/>
            <person name="Hemphill L."/>
            <person name="Bason N."/>
            <person name="Farbrother P."/>
            <person name="Desany B."/>
            <person name="Just E."/>
            <person name="Morio T."/>
            <person name="Rost R."/>
            <person name="Churcher C.M."/>
            <person name="Cooper J."/>
            <person name="Haydock S."/>
            <person name="van Driessche N."/>
            <person name="Cronin A."/>
            <person name="Goodhead I."/>
            <person name="Muzny D.M."/>
            <person name="Mourier T."/>
            <person name="Pain A."/>
            <person name="Lu M."/>
            <person name="Harper D."/>
            <person name="Lindsay R."/>
            <person name="Hauser H."/>
            <person name="James K.D."/>
            <person name="Quiles M."/>
            <person name="Madan Babu M."/>
            <person name="Saito T."/>
            <person name="Buchrieser C."/>
            <person name="Wardroper A."/>
            <person name="Felder M."/>
            <person name="Thangavelu M."/>
            <person name="Johnson D."/>
            <person name="Knights A."/>
            <person name="Loulseged H."/>
            <person name="Mungall K.L."/>
            <person name="Oliver K."/>
            <person name="Price C."/>
            <person name="Quail M.A."/>
            <person name="Urushihara H."/>
            <person name="Hernandez J."/>
            <person name="Rabbinowitsch E."/>
            <person name="Steffen D."/>
            <person name="Sanders M."/>
            <person name="Ma J."/>
            <person name="Kohara Y."/>
            <person name="Sharp S."/>
            <person name="Simmonds M.N."/>
            <person name="Spiegler S."/>
            <person name="Tivey A."/>
            <person name="Sugano S."/>
            <person name="White B."/>
            <person name="Walker D."/>
            <person name="Woodward J.R."/>
            <person name="Winckler T."/>
            <person name="Tanaka Y."/>
            <person name="Shaulsky G."/>
            <person name="Schleicher M."/>
            <person name="Weinstock G.M."/>
            <person name="Rosenthal A."/>
            <person name="Cox E.C."/>
            <person name="Chisholm R.L."/>
            <person name="Gibbs R.A."/>
            <person name="Loomis W.F."/>
            <person name="Platzer M."/>
            <person name="Kay R.R."/>
            <person name="Williams J.G."/>
            <person name="Dear P.H."/>
            <person name="Noegel A.A."/>
            <person name="Barrell B.G."/>
            <person name="Kuspa A."/>
        </authorList>
    </citation>
    <scope>NUCLEOTIDE SEQUENCE [LARGE SCALE GENOMIC DNA]</scope>
    <source>
        <strain>AX4</strain>
    </source>
</reference>
<protein>
    <recommendedName>
        <fullName>Ras-related protein Rab-1A</fullName>
    </recommendedName>
</protein>
<name>RAB1A_DICDI</name>
<proteinExistence type="evidence at transcript level"/>
<sequence>MNPDYHYLFKLLLIGDSGVGKSCLLLRFADDTYSESFISTIGVDFKIRTIELNGKTIKLQIWDTAGQERFRTITSSYYRGAHGIIVVYDVTDKLTFENVRQWLQEIDRFACENVNKLLVGNKSDLVAKKVVDFNTAKAFADSLQIPFLETSAKQSTNVEQAFMTMATEIKNRLTASQPTQTVDKNKVVPGSSAPISPKSGCC</sequence>